<gene>
    <name type="primary">Cmtm2a</name>
    <name type="synonym">Cklfsf2a</name>
</gene>
<sequence length="169" mass="19553">MAAPIKFPFRPRGGQPREDTTPKRGLRRYLLELKESNKEFWLSGHAVFKLLSLGCMISALDYFETMLPHPVLILLICMEAAICIFFIFLNTLAINRYIPFVFWPMADIFNSLFSCVFLGGGIYFAFKARRLLPKPYLTAMILMGAAAICSFIDMLLQFQHFRGLRLRKW</sequence>
<comment type="subcellular location">
    <subcellularLocation>
        <location>Membrane</location>
        <topology>Multi-pass membrane protein</topology>
    </subcellularLocation>
</comment>
<comment type="alternative products">
    <event type="alternative splicing"/>
    <isoform>
        <id>Q9DAR1-1</id>
        <name>1</name>
        <name>1b</name>
        <sequence type="displayed"/>
    </isoform>
    <isoform>
        <id>Q9DAR1-2</id>
        <name>2</name>
        <sequence type="described" ref="VSP_008255"/>
    </isoform>
    <isoform>
        <id>Q9DAR1-3</id>
        <name>3</name>
        <name>1a</name>
        <sequence type="described" ref="VSP_008253 VSP_008254"/>
    </isoform>
    <isoform>
        <id>Q9DAC0-1</id>
        <name>4</name>
        <sequence type="external"/>
    </isoform>
</comment>
<comment type="similarity">
    <text evidence="5">Belongs to the chemokine-like factor family.</text>
</comment>
<evidence type="ECO:0000255" key="1"/>
<evidence type="ECO:0000255" key="2">
    <source>
        <dbReference type="PROSITE-ProRule" id="PRU00581"/>
    </source>
</evidence>
<evidence type="ECO:0000303" key="3">
    <source>
    </source>
</evidence>
<evidence type="ECO:0000303" key="4">
    <source ref="1"/>
</evidence>
<evidence type="ECO:0000305" key="5"/>
<keyword id="KW-0025">Alternative splicing</keyword>
<keyword id="KW-0145">Chemotaxis</keyword>
<keyword id="KW-0202">Cytokine</keyword>
<keyword id="KW-0472">Membrane</keyword>
<keyword id="KW-1185">Reference proteome</keyword>
<keyword id="KW-0812">Transmembrane</keyword>
<keyword id="KW-1133">Transmembrane helix</keyword>
<reference key="1">
    <citation type="submission" date="2002-10" db="EMBL/GenBank/DDBJ databases">
        <authorList>
            <person name="Li T."/>
            <person name="Han W."/>
            <person name="Yang T."/>
            <person name="Ma D."/>
        </authorList>
    </citation>
    <scope>NUCLEOTIDE SEQUENCE [MRNA] (ISOFORM 3)</scope>
</reference>
<reference key="2">
    <citation type="submission" date="2002-11" db="EMBL/GenBank/DDBJ databases">
        <authorList>
            <person name="Rui M."/>
            <person name="Han W."/>
            <person name="Ma D."/>
        </authorList>
    </citation>
    <scope>NUCLEOTIDE SEQUENCE [MRNA] (ISOFORM 1)</scope>
</reference>
<reference key="3">
    <citation type="submission" date="2003-02" db="EMBL/GenBank/DDBJ databases">
        <authorList>
            <person name="Han W."/>
            <person name="Li T."/>
            <person name="Tan Y."/>
            <person name="Shi S."/>
            <person name="Ding P."/>
            <person name="Ma D."/>
        </authorList>
    </citation>
    <scope>NUCLEOTIDE SEQUENCE [MRNA] (ISOFORM 1)</scope>
    <source>
        <tissue>Testis</tissue>
    </source>
</reference>
<reference key="4">
    <citation type="journal article" date="2005" name="Science">
        <title>The transcriptional landscape of the mammalian genome.</title>
        <authorList>
            <person name="Carninci P."/>
            <person name="Kasukawa T."/>
            <person name="Katayama S."/>
            <person name="Gough J."/>
            <person name="Frith M.C."/>
            <person name="Maeda N."/>
            <person name="Oyama R."/>
            <person name="Ravasi T."/>
            <person name="Lenhard B."/>
            <person name="Wells C."/>
            <person name="Kodzius R."/>
            <person name="Shimokawa K."/>
            <person name="Bajic V.B."/>
            <person name="Brenner S.E."/>
            <person name="Batalov S."/>
            <person name="Forrest A.R."/>
            <person name="Zavolan M."/>
            <person name="Davis M.J."/>
            <person name="Wilming L.G."/>
            <person name="Aidinis V."/>
            <person name="Allen J.E."/>
            <person name="Ambesi-Impiombato A."/>
            <person name="Apweiler R."/>
            <person name="Aturaliya R.N."/>
            <person name="Bailey T.L."/>
            <person name="Bansal M."/>
            <person name="Baxter L."/>
            <person name="Beisel K.W."/>
            <person name="Bersano T."/>
            <person name="Bono H."/>
            <person name="Chalk A.M."/>
            <person name="Chiu K.P."/>
            <person name="Choudhary V."/>
            <person name="Christoffels A."/>
            <person name="Clutterbuck D.R."/>
            <person name="Crowe M.L."/>
            <person name="Dalla E."/>
            <person name="Dalrymple B.P."/>
            <person name="de Bono B."/>
            <person name="Della Gatta G."/>
            <person name="di Bernardo D."/>
            <person name="Down T."/>
            <person name="Engstrom P."/>
            <person name="Fagiolini M."/>
            <person name="Faulkner G."/>
            <person name="Fletcher C.F."/>
            <person name="Fukushima T."/>
            <person name="Furuno M."/>
            <person name="Futaki S."/>
            <person name="Gariboldi M."/>
            <person name="Georgii-Hemming P."/>
            <person name="Gingeras T.R."/>
            <person name="Gojobori T."/>
            <person name="Green R.E."/>
            <person name="Gustincich S."/>
            <person name="Harbers M."/>
            <person name="Hayashi Y."/>
            <person name="Hensch T.K."/>
            <person name="Hirokawa N."/>
            <person name="Hill D."/>
            <person name="Huminiecki L."/>
            <person name="Iacono M."/>
            <person name="Ikeo K."/>
            <person name="Iwama A."/>
            <person name="Ishikawa T."/>
            <person name="Jakt M."/>
            <person name="Kanapin A."/>
            <person name="Katoh M."/>
            <person name="Kawasawa Y."/>
            <person name="Kelso J."/>
            <person name="Kitamura H."/>
            <person name="Kitano H."/>
            <person name="Kollias G."/>
            <person name="Krishnan S.P."/>
            <person name="Kruger A."/>
            <person name="Kummerfeld S.K."/>
            <person name="Kurochkin I.V."/>
            <person name="Lareau L.F."/>
            <person name="Lazarevic D."/>
            <person name="Lipovich L."/>
            <person name="Liu J."/>
            <person name="Liuni S."/>
            <person name="McWilliam S."/>
            <person name="Madan Babu M."/>
            <person name="Madera M."/>
            <person name="Marchionni L."/>
            <person name="Matsuda H."/>
            <person name="Matsuzawa S."/>
            <person name="Miki H."/>
            <person name="Mignone F."/>
            <person name="Miyake S."/>
            <person name="Morris K."/>
            <person name="Mottagui-Tabar S."/>
            <person name="Mulder N."/>
            <person name="Nakano N."/>
            <person name="Nakauchi H."/>
            <person name="Ng P."/>
            <person name="Nilsson R."/>
            <person name="Nishiguchi S."/>
            <person name="Nishikawa S."/>
            <person name="Nori F."/>
            <person name="Ohara O."/>
            <person name="Okazaki Y."/>
            <person name="Orlando V."/>
            <person name="Pang K.C."/>
            <person name="Pavan W.J."/>
            <person name="Pavesi G."/>
            <person name="Pesole G."/>
            <person name="Petrovsky N."/>
            <person name="Piazza S."/>
            <person name="Reed J."/>
            <person name="Reid J.F."/>
            <person name="Ring B.Z."/>
            <person name="Ringwald M."/>
            <person name="Rost B."/>
            <person name="Ruan Y."/>
            <person name="Salzberg S.L."/>
            <person name="Sandelin A."/>
            <person name="Schneider C."/>
            <person name="Schoenbach C."/>
            <person name="Sekiguchi K."/>
            <person name="Semple C.A."/>
            <person name="Seno S."/>
            <person name="Sessa L."/>
            <person name="Sheng Y."/>
            <person name="Shibata Y."/>
            <person name="Shimada H."/>
            <person name="Shimada K."/>
            <person name="Silva D."/>
            <person name="Sinclair B."/>
            <person name="Sperling S."/>
            <person name="Stupka E."/>
            <person name="Sugiura K."/>
            <person name="Sultana R."/>
            <person name="Takenaka Y."/>
            <person name="Taki K."/>
            <person name="Tammoja K."/>
            <person name="Tan S.L."/>
            <person name="Tang S."/>
            <person name="Taylor M.S."/>
            <person name="Tegner J."/>
            <person name="Teichmann S.A."/>
            <person name="Ueda H.R."/>
            <person name="van Nimwegen E."/>
            <person name="Verardo R."/>
            <person name="Wei C.L."/>
            <person name="Yagi K."/>
            <person name="Yamanishi H."/>
            <person name="Zabarovsky E."/>
            <person name="Zhu S."/>
            <person name="Zimmer A."/>
            <person name="Hide W."/>
            <person name="Bult C."/>
            <person name="Grimmond S.M."/>
            <person name="Teasdale R.D."/>
            <person name="Liu E.T."/>
            <person name="Brusic V."/>
            <person name="Quackenbush J."/>
            <person name="Wahlestedt C."/>
            <person name="Mattick J.S."/>
            <person name="Hume D.A."/>
            <person name="Kai C."/>
            <person name="Sasaki D."/>
            <person name="Tomaru Y."/>
            <person name="Fukuda S."/>
            <person name="Kanamori-Katayama M."/>
            <person name="Suzuki M."/>
            <person name="Aoki J."/>
            <person name="Arakawa T."/>
            <person name="Iida J."/>
            <person name="Imamura K."/>
            <person name="Itoh M."/>
            <person name="Kato T."/>
            <person name="Kawaji H."/>
            <person name="Kawagashira N."/>
            <person name="Kawashima T."/>
            <person name="Kojima M."/>
            <person name="Kondo S."/>
            <person name="Konno H."/>
            <person name="Nakano K."/>
            <person name="Ninomiya N."/>
            <person name="Nishio T."/>
            <person name="Okada M."/>
            <person name="Plessy C."/>
            <person name="Shibata K."/>
            <person name="Shiraki T."/>
            <person name="Suzuki S."/>
            <person name="Tagami M."/>
            <person name="Waki K."/>
            <person name="Watahiki A."/>
            <person name="Okamura-Oho Y."/>
            <person name="Suzuki H."/>
            <person name="Kawai J."/>
            <person name="Hayashizaki Y."/>
        </authorList>
    </citation>
    <scope>NUCLEOTIDE SEQUENCE [LARGE SCALE MRNA] (ISOFORM 1)</scope>
    <scope>NUCLEOTIDE SEQUENCE [LARGE SCALE MRNA] OF 1-168 (ISOFORM 2)</scope>
    <source>
        <strain>C57BL/6J</strain>
        <tissue>Testis</tissue>
    </source>
</reference>
<reference key="5">
    <citation type="journal article" date="2004" name="Genome Res.">
        <title>The status, quality, and expansion of the NIH full-length cDNA project: the Mammalian Gene Collection (MGC).</title>
        <authorList>
            <consortium name="The MGC Project Team"/>
        </authorList>
    </citation>
    <scope>NUCLEOTIDE SEQUENCE [LARGE SCALE MRNA] (ISOFORM 1)</scope>
    <source>
        <tissue>Testis</tissue>
    </source>
</reference>
<organism>
    <name type="scientific">Mus musculus</name>
    <name type="common">Mouse</name>
    <dbReference type="NCBI Taxonomy" id="10090"/>
    <lineage>
        <taxon>Eukaryota</taxon>
        <taxon>Metazoa</taxon>
        <taxon>Chordata</taxon>
        <taxon>Craniata</taxon>
        <taxon>Vertebrata</taxon>
        <taxon>Euteleostomi</taxon>
        <taxon>Mammalia</taxon>
        <taxon>Eutheria</taxon>
        <taxon>Euarchontoglires</taxon>
        <taxon>Glires</taxon>
        <taxon>Rodentia</taxon>
        <taxon>Myomorpha</taxon>
        <taxon>Muroidea</taxon>
        <taxon>Muridae</taxon>
        <taxon>Murinae</taxon>
        <taxon>Mus</taxon>
        <taxon>Mus</taxon>
    </lineage>
</organism>
<feature type="chain" id="PRO_0000186099" description="CKLF-like MARVEL transmembrane domain-containing protein 2A">
    <location>
        <begin position="1"/>
        <end position="169"/>
    </location>
</feature>
<feature type="transmembrane region" description="Helical" evidence="1">
    <location>
        <begin position="40"/>
        <end position="60"/>
    </location>
</feature>
<feature type="transmembrane region" description="Helical" evidence="1">
    <location>
        <begin position="69"/>
        <end position="89"/>
    </location>
</feature>
<feature type="transmembrane region" description="Helical" evidence="1">
    <location>
        <begin position="98"/>
        <end position="118"/>
    </location>
</feature>
<feature type="transmembrane region" description="Helical" evidence="1">
    <location>
        <begin position="136"/>
        <end position="156"/>
    </location>
</feature>
<feature type="domain" description="MARVEL" evidence="2">
    <location>
        <begin position="40"/>
        <end position="162"/>
    </location>
</feature>
<feature type="splice variant" id="VSP_008253" description="In isoform 3." evidence="4">
    <original>YIPFV</original>
    <variation>SEALG</variation>
    <location>
        <begin position="97"/>
        <end position="101"/>
    </location>
</feature>
<feature type="splice variant" id="VSP_008254" description="In isoform 3." evidence="4">
    <location>
        <begin position="102"/>
        <end position="169"/>
    </location>
</feature>
<feature type="splice variant" id="VSP_008255" description="In isoform 2." evidence="3">
    <original>DIFNSLFSCVFLGGGIYFAFKARRLLPKPYLTAMILMGAAAICSFIDMLLQFQHFRGLRLRK</original>
    <variation>LLVSRDPSVLRKTTSTGGKEKRMQMRTFESRTHRRQSEKDGARVLSEGAEEISFSLVKGKAR</variation>
    <location>
        <begin position="107"/>
        <end position="168"/>
    </location>
</feature>
<protein>
    <recommendedName>
        <fullName>CKLF-like MARVEL transmembrane domain-containing protein 2A</fullName>
    </recommendedName>
    <alternativeName>
        <fullName>Chemokine-like factor superfamily member 2A</fullName>
    </alternativeName>
</protein>
<dbReference type="EMBL" id="AY162281">
    <property type="protein sequence ID" value="AAO34102.1"/>
    <property type="molecule type" value="mRNA"/>
</dbReference>
<dbReference type="EMBL" id="AY172740">
    <property type="protein sequence ID" value="AAO17718.1"/>
    <property type="molecule type" value="mRNA"/>
</dbReference>
<dbReference type="EMBL" id="AY241871">
    <property type="protein sequence ID" value="AAP33493.1"/>
    <property type="molecule type" value="mRNA"/>
</dbReference>
<dbReference type="EMBL" id="AK005603">
    <property type="protein sequence ID" value="BAB24146.1"/>
    <property type="molecule type" value="mRNA"/>
</dbReference>
<dbReference type="EMBL" id="AK006874">
    <property type="protein sequence ID" value="BAB24775.1"/>
    <property type="molecule type" value="mRNA"/>
</dbReference>
<dbReference type="EMBL" id="BC049747">
    <property type="protein sequence ID" value="AAH49747.1"/>
    <property type="molecule type" value="mRNA"/>
</dbReference>
<dbReference type="CCDS" id="CCDS40451.1">
    <molecule id="Q9DAR1-1"/>
</dbReference>
<dbReference type="RefSeq" id="NP_081298.1">
    <molecule id="Q9DAR1-1"/>
    <property type="nucleotide sequence ID" value="NM_027022.4"/>
</dbReference>
<dbReference type="SMR" id="Q9DAR1"/>
<dbReference type="BioGRID" id="215972">
    <property type="interactions" value="1"/>
</dbReference>
<dbReference type="FunCoup" id="Q9DAR1">
    <property type="interactions" value="7"/>
</dbReference>
<dbReference type="STRING" id="10090.ENSMUSP00000034344"/>
<dbReference type="TCDB" id="1.A.64.5.6">
    <property type="family name" value="the plasmolipin (plasmolipin) family"/>
</dbReference>
<dbReference type="PaxDb" id="10090-ENSMUSP00000034344"/>
<dbReference type="Ensembl" id="ENSMUST00000034344.10">
    <molecule id="Q9DAR1-1"/>
    <property type="protein sequence ID" value="ENSMUSP00000034344.10"/>
    <property type="gene ID" value="ENSMUSG00000074127.7"/>
</dbReference>
<dbReference type="GeneID" id="73381"/>
<dbReference type="KEGG" id="mmu:73381"/>
<dbReference type="UCSC" id="uc009nah.1">
    <molecule id="Q9DAR1-1"/>
    <property type="organism name" value="mouse"/>
</dbReference>
<dbReference type="UCSC" id="uc009naj.1">
    <molecule id="Q9DAR1-2"/>
    <property type="organism name" value="mouse"/>
</dbReference>
<dbReference type="AGR" id="MGI:2447160"/>
<dbReference type="CTD" id="73381"/>
<dbReference type="MGI" id="MGI:2447160">
    <property type="gene designation" value="Cmtm2a"/>
</dbReference>
<dbReference type="VEuPathDB" id="HostDB:ENSMUSG00000074127"/>
<dbReference type="eggNOG" id="KOG4788">
    <property type="taxonomic scope" value="Eukaryota"/>
</dbReference>
<dbReference type="GeneTree" id="ENSGT00390000005715"/>
<dbReference type="HOGENOM" id="CLU_106771_0_0_1"/>
<dbReference type="InParanoid" id="Q9DAR1"/>
<dbReference type="OMA" id="MEISIFC"/>
<dbReference type="OrthoDB" id="9634153at2759"/>
<dbReference type="PhylomeDB" id="Q9DAR1"/>
<dbReference type="TreeFam" id="TF338711"/>
<dbReference type="BioGRID-ORCS" id="73381">
    <property type="hits" value="1 hit in 79 CRISPR screens"/>
</dbReference>
<dbReference type="PRO" id="PR:Q9DAR1"/>
<dbReference type="Proteomes" id="UP000000589">
    <property type="component" value="Chromosome 8"/>
</dbReference>
<dbReference type="RNAct" id="Q9DAR1">
    <property type="molecule type" value="protein"/>
</dbReference>
<dbReference type="Bgee" id="ENSMUSG00000074127">
    <property type="expression patterns" value="Expressed in spermatid and 16 other cell types or tissues"/>
</dbReference>
<dbReference type="ExpressionAtlas" id="Q9DAR1">
    <property type="expression patterns" value="baseline and differential"/>
</dbReference>
<dbReference type="GO" id="GO:0005737">
    <property type="term" value="C:cytoplasm"/>
    <property type="evidence" value="ECO:0000314"/>
    <property type="project" value="MGI"/>
</dbReference>
<dbReference type="GO" id="GO:0005615">
    <property type="term" value="C:extracellular space"/>
    <property type="evidence" value="ECO:0007669"/>
    <property type="project" value="UniProtKB-KW"/>
</dbReference>
<dbReference type="GO" id="GO:0016020">
    <property type="term" value="C:membrane"/>
    <property type="evidence" value="ECO:0007669"/>
    <property type="project" value="UniProtKB-SubCell"/>
</dbReference>
<dbReference type="GO" id="GO:0005634">
    <property type="term" value="C:nucleus"/>
    <property type="evidence" value="ECO:0000353"/>
    <property type="project" value="MGI"/>
</dbReference>
<dbReference type="GO" id="GO:0005125">
    <property type="term" value="F:cytokine activity"/>
    <property type="evidence" value="ECO:0007669"/>
    <property type="project" value="UniProtKB-KW"/>
</dbReference>
<dbReference type="GO" id="GO:0003714">
    <property type="term" value="F:transcription corepressor activity"/>
    <property type="evidence" value="ECO:0000314"/>
    <property type="project" value="MGI"/>
</dbReference>
<dbReference type="GO" id="GO:0006935">
    <property type="term" value="P:chemotaxis"/>
    <property type="evidence" value="ECO:0007669"/>
    <property type="project" value="UniProtKB-KW"/>
</dbReference>
<dbReference type="GO" id="GO:0045892">
    <property type="term" value="P:negative regulation of DNA-templated transcription"/>
    <property type="evidence" value="ECO:0000314"/>
    <property type="project" value="MGI"/>
</dbReference>
<dbReference type="GO" id="GO:2000224">
    <property type="term" value="P:regulation of testosterone biosynthetic process"/>
    <property type="evidence" value="ECO:0000314"/>
    <property type="project" value="MGI"/>
</dbReference>
<dbReference type="InterPro" id="IPR008253">
    <property type="entry name" value="Marvel"/>
</dbReference>
<dbReference type="PROSITE" id="PS51225">
    <property type="entry name" value="MARVEL"/>
    <property type="match status" value="1"/>
</dbReference>
<proteinExistence type="evidence at transcript level"/>
<accession>Q9DAR1</accession>
<accession>Q811V3</accession>
<accession>Q9CVR4</accession>
<name>CLF2A_MOUSE</name>